<comment type="function">
    <text evidence="1">Catalyzes the synthesis of the hydroxymethylpyrimidine phosphate (HMP-P) moiety of thiamine from aminoimidazole ribotide (AIR) in a radical S-adenosyl-L-methionine (SAM)-dependent reaction.</text>
</comment>
<comment type="catalytic activity">
    <reaction evidence="1">
        <text>5-amino-1-(5-phospho-beta-D-ribosyl)imidazole + S-adenosyl-L-methionine = 4-amino-2-methyl-5-(phosphooxymethyl)pyrimidine + CO + 5'-deoxyadenosine + formate + L-methionine + 3 H(+)</text>
        <dbReference type="Rhea" id="RHEA:24840"/>
        <dbReference type="ChEBI" id="CHEBI:15378"/>
        <dbReference type="ChEBI" id="CHEBI:15740"/>
        <dbReference type="ChEBI" id="CHEBI:17245"/>
        <dbReference type="ChEBI" id="CHEBI:17319"/>
        <dbReference type="ChEBI" id="CHEBI:57844"/>
        <dbReference type="ChEBI" id="CHEBI:58354"/>
        <dbReference type="ChEBI" id="CHEBI:59789"/>
        <dbReference type="ChEBI" id="CHEBI:137981"/>
        <dbReference type="EC" id="4.1.99.17"/>
    </reaction>
</comment>
<comment type="cofactor">
    <cofactor evidence="1">
        <name>[4Fe-4S] cluster</name>
        <dbReference type="ChEBI" id="CHEBI:49883"/>
    </cofactor>
    <text evidence="1">Binds 1 [4Fe-4S] cluster per subunit. The cluster is coordinated with 3 cysteines and an exchangeable S-adenosyl-L-methionine.</text>
</comment>
<comment type="pathway">
    <text evidence="1">Cofactor biosynthesis; thiamine diphosphate biosynthesis.</text>
</comment>
<comment type="subunit">
    <text evidence="1">Homodimer.</text>
</comment>
<comment type="similarity">
    <text evidence="1">Belongs to the ThiC family.</text>
</comment>
<protein>
    <recommendedName>
        <fullName evidence="1">Phosphomethylpyrimidine synthase</fullName>
        <ecNumber evidence="1">4.1.99.17</ecNumber>
    </recommendedName>
    <alternativeName>
        <fullName evidence="1">Hydroxymethylpyrimidine phosphate synthase</fullName>
        <shortName evidence="1">HMP-P synthase</shortName>
        <shortName evidence="1">HMP-phosphate synthase</shortName>
        <shortName evidence="1">HMPP synthase</shortName>
    </alternativeName>
    <alternativeName>
        <fullName evidence="1">Thiamine biosynthesis protein ThiC</fullName>
    </alternativeName>
</protein>
<gene>
    <name evidence="1" type="primary">thiC</name>
    <name type="ordered locus">Swit_3201</name>
</gene>
<organism>
    <name type="scientific">Rhizorhabdus wittichii (strain DSM 6014 / CCUG 31198 / JCM 15750 / NBRC 105917 / EY 4224 / RW1)</name>
    <name type="common">Sphingomonas wittichii</name>
    <dbReference type="NCBI Taxonomy" id="392499"/>
    <lineage>
        <taxon>Bacteria</taxon>
        <taxon>Pseudomonadati</taxon>
        <taxon>Pseudomonadota</taxon>
        <taxon>Alphaproteobacteria</taxon>
        <taxon>Sphingomonadales</taxon>
        <taxon>Sphingomonadaceae</taxon>
        <taxon>Rhizorhabdus</taxon>
    </lineage>
</organism>
<evidence type="ECO:0000255" key="1">
    <source>
        <dbReference type="HAMAP-Rule" id="MF_00089"/>
    </source>
</evidence>
<evidence type="ECO:0000256" key="2">
    <source>
        <dbReference type="SAM" id="MobiDB-lite"/>
    </source>
</evidence>
<sequence>MADIPARTEMKVTTGPIRGSRKIHVEGPQGVRVAMREIALEPSSGEPPVRVYDCSGPYTDPNAHIDIMAGLPALRRDWILGRGDVEDYEGRAIKPEDNGLKGPDRSGGVTPFPNVVRRPLRAKAGQNVSQMHYARRGIITPEMEYVAIRENVGRAALKEKLLRDGEDFGAAIPDFVTPEFVRDEVARGRAIIPSNINHPESEPMAIGRNFLVKINANIGNSAVASDVAAEVDKMVWSIRWGADTVMDLSTGRNIHDTREWILRNSPVPIGTVPIYQALEKVGGIAEDLTWEIFRDTLIEQAEQGVDYFTIHAGVRLPFIPMTAKRVTGIVSRGGSIMAKWCLAHHRESFLYERFDEICEIMKAYDVAFSLGDGLRPGSIADANDEAQFSELKTLGELTQIAWQHDVQVMIEGPGHVPMHKIKANMDKQLEACGEAPFYTLGPLTTDIAPGYDHITSAIGAAMIGWFGTAMLCYVTPKEHLGLPDRDDVKVGVVTYKLAAHAADLAKGHPAAKLRDDALSRARFEFRWRDQFNLSLDPDTAEQYHDQTLPAEGAKTAHFCSMCGPKFCSMKITQEVRDFAATRNAPADQFIAAGDAEAGMRAMSDVFREKGGEIYLPAAE</sequence>
<feature type="chain" id="PRO_1000004807" description="Phosphomethylpyrimidine synthase">
    <location>
        <begin position="1"/>
        <end position="619"/>
    </location>
</feature>
<feature type="region of interest" description="Disordered" evidence="2">
    <location>
        <begin position="93"/>
        <end position="114"/>
    </location>
</feature>
<feature type="compositionally biased region" description="Basic and acidic residues" evidence="2">
    <location>
        <begin position="93"/>
        <end position="104"/>
    </location>
</feature>
<feature type="binding site" evidence="1">
    <location>
        <position position="217"/>
    </location>
    <ligand>
        <name>substrate</name>
    </ligand>
</feature>
<feature type="binding site" evidence="1">
    <location>
        <position position="246"/>
    </location>
    <ligand>
        <name>substrate</name>
    </ligand>
</feature>
<feature type="binding site" evidence="1">
    <location>
        <position position="275"/>
    </location>
    <ligand>
        <name>substrate</name>
    </ligand>
</feature>
<feature type="binding site" evidence="1">
    <location>
        <position position="311"/>
    </location>
    <ligand>
        <name>substrate</name>
    </ligand>
</feature>
<feature type="binding site" evidence="1">
    <location>
        <begin position="331"/>
        <end position="333"/>
    </location>
    <ligand>
        <name>substrate</name>
    </ligand>
</feature>
<feature type="binding site" evidence="1">
    <location>
        <begin position="372"/>
        <end position="375"/>
    </location>
    <ligand>
        <name>substrate</name>
    </ligand>
</feature>
<feature type="binding site" evidence="1">
    <location>
        <position position="411"/>
    </location>
    <ligand>
        <name>substrate</name>
    </ligand>
</feature>
<feature type="binding site" evidence="1">
    <location>
        <position position="415"/>
    </location>
    <ligand>
        <name>Zn(2+)</name>
        <dbReference type="ChEBI" id="CHEBI:29105"/>
    </ligand>
</feature>
<feature type="binding site" evidence="1">
    <location>
        <position position="438"/>
    </location>
    <ligand>
        <name>substrate</name>
    </ligand>
</feature>
<feature type="binding site" evidence="1">
    <location>
        <position position="479"/>
    </location>
    <ligand>
        <name>Zn(2+)</name>
        <dbReference type="ChEBI" id="CHEBI:29105"/>
    </ligand>
</feature>
<feature type="binding site" evidence="1">
    <location>
        <position position="559"/>
    </location>
    <ligand>
        <name>[4Fe-4S] cluster</name>
        <dbReference type="ChEBI" id="CHEBI:49883"/>
        <note>4Fe-4S-S-AdoMet</note>
    </ligand>
</feature>
<feature type="binding site" evidence="1">
    <location>
        <position position="562"/>
    </location>
    <ligand>
        <name>[4Fe-4S] cluster</name>
        <dbReference type="ChEBI" id="CHEBI:49883"/>
        <note>4Fe-4S-S-AdoMet</note>
    </ligand>
</feature>
<feature type="binding site" evidence="1">
    <location>
        <position position="567"/>
    </location>
    <ligand>
        <name>[4Fe-4S] cluster</name>
        <dbReference type="ChEBI" id="CHEBI:49883"/>
        <note>4Fe-4S-S-AdoMet</note>
    </ligand>
</feature>
<keyword id="KW-0004">4Fe-4S</keyword>
<keyword id="KW-0408">Iron</keyword>
<keyword id="KW-0411">Iron-sulfur</keyword>
<keyword id="KW-0456">Lyase</keyword>
<keyword id="KW-0479">Metal-binding</keyword>
<keyword id="KW-1185">Reference proteome</keyword>
<keyword id="KW-0949">S-adenosyl-L-methionine</keyword>
<keyword id="KW-0784">Thiamine biosynthesis</keyword>
<keyword id="KW-0862">Zinc</keyword>
<accession>A5VB82</accession>
<proteinExistence type="inferred from homology"/>
<name>THIC_RHIWR</name>
<dbReference type="EC" id="4.1.99.17" evidence="1"/>
<dbReference type="EMBL" id="CP000699">
    <property type="protein sequence ID" value="ABQ69548.1"/>
    <property type="molecule type" value="Genomic_DNA"/>
</dbReference>
<dbReference type="SMR" id="A5VB82"/>
<dbReference type="STRING" id="392499.Swit_3201"/>
<dbReference type="PaxDb" id="392499-Swit_3201"/>
<dbReference type="KEGG" id="swi:Swit_3201"/>
<dbReference type="eggNOG" id="COG0422">
    <property type="taxonomic scope" value="Bacteria"/>
</dbReference>
<dbReference type="HOGENOM" id="CLU_013181_2_1_5"/>
<dbReference type="OrthoDB" id="9805897at2"/>
<dbReference type="UniPathway" id="UPA00060"/>
<dbReference type="Proteomes" id="UP000001989">
    <property type="component" value="Chromosome"/>
</dbReference>
<dbReference type="GO" id="GO:0005829">
    <property type="term" value="C:cytosol"/>
    <property type="evidence" value="ECO:0007669"/>
    <property type="project" value="TreeGrafter"/>
</dbReference>
<dbReference type="GO" id="GO:0051539">
    <property type="term" value="F:4 iron, 4 sulfur cluster binding"/>
    <property type="evidence" value="ECO:0007669"/>
    <property type="project" value="UniProtKB-KW"/>
</dbReference>
<dbReference type="GO" id="GO:0016830">
    <property type="term" value="F:carbon-carbon lyase activity"/>
    <property type="evidence" value="ECO:0007669"/>
    <property type="project" value="InterPro"/>
</dbReference>
<dbReference type="GO" id="GO:0008270">
    <property type="term" value="F:zinc ion binding"/>
    <property type="evidence" value="ECO:0007669"/>
    <property type="project" value="UniProtKB-UniRule"/>
</dbReference>
<dbReference type="GO" id="GO:0009228">
    <property type="term" value="P:thiamine biosynthetic process"/>
    <property type="evidence" value="ECO:0007669"/>
    <property type="project" value="UniProtKB-KW"/>
</dbReference>
<dbReference type="GO" id="GO:0009229">
    <property type="term" value="P:thiamine diphosphate biosynthetic process"/>
    <property type="evidence" value="ECO:0007669"/>
    <property type="project" value="UniProtKB-UniRule"/>
</dbReference>
<dbReference type="FunFam" id="3.20.20.540:FF:000001">
    <property type="entry name" value="Phosphomethylpyrimidine synthase"/>
    <property type="match status" value="1"/>
</dbReference>
<dbReference type="Gene3D" id="6.10.250.620">
    <property type="match status" value="1"/>
</dbReference>
<dbReference type="Gene3D" id="3.20.20.540">
    <property type="entry name" value="Radical SAM ThiC family, central domain"/>
    <property type="match status" value="1"/>
</dbReference>
<dbReference type="HAMAP" id="MF_00089">
    <property type="entry name" value="ThiC"/>
    <property type="match status" value="1"/>
</dbReference>
<dbReference type="InterPro" id="IPR037509">
    <property type="entry name" value="ThiC"/>
</dbReference>
<dbReference type="InterPro" id="IPR025747">
    <property type="entry name" value="ThiC-associated_dom"/>
</dbReference>
<dbReference type="InterPro" id="IPR038521">
    <property type="entry name" value="ThiC/Bza_core_dom"/>
</dbReference>
<dbReference type="InterPro" id="IPR002817">
    <property type="entry name" value="ThiC/BzaA/B"/>
</dbReference>
<dbReference type="NCBIfam" id="NF006763">
    <property type="entry name" value="PRK09284.1"/>
    <property type="match status" value="1"/>
</dbReference>
<dbReference type="NCBIfam" id="NF009895">
    <property type="entry name" value="PRK13352.1"/>
    <property type="match status" value="1"/>
</dbReference>
<dbReference type="NCBIfam" id="TIGR00190">
    <property type="entry name" value="thiC"/>
    <property type="match status" value="1"/>
</dbReference>
<dbReference type="PANTHER" id="PTHR30557:SF1">
    <property type="entry name" value="PHOSPHOMETHYLPYRIMIDINE SYNTHASE, CHLOROPLASTIC"/>
    <property type="match status" value="1"/>
</dbReference>
<dbReference type="PANTHER" id="PTHR30557">
    <property type="entry name" value="THIAMINE BIOSYNTHESIS PROTEIN THIC"/>
    <property type="match status" value="1"/>
</dbReference>
<dbReference type="Pfam" id="PF13667">
    <property type="entry name" value="ThiC-associated"/>
    <property type="match status" value="1"/>
</dbReference>
<dbReference type="Pfam" id="PF01964">
    <property type="entry name" value="ThiC_Rad_SAM"/>
    <property type="match status" value="1"/>
</dbReference>
<dbReference type="SFLD" id="SFLDF00407">
    <property type="entry name" value="phosphomethylpyrimidine_syntha"/>
    <property type="match status" value="1"/>
</dbReference>
<dbReference type="SFLD" id="SFLDG01114">
    <property type="entry name" value="phosphomethylpyrimidine_syntha"/>
    <property type="match status" value="1"/>
</dbReference>
<dbReference type="SFLD" id="SFLDS00113">
    <property type="entry name" value="Radical_SAM_Phosphomethylpyrim"/>
    <property type="match status" value="1"/>
</dbReference>
<reference key="1">
    <citation type="journal article" date="2010" name="J. Bacteriol.">
        <title>Genome sequence of the dioxin-mineralizing bacterium Sphingomonas wittichii RW1.</title>
        <authorList>
            <person name="Miller T.R."/>
            <person name="Delcher A.L."/>
            <person name="Salzberg S.L."/>
            <person name="Saunders E."/>
            <person name="Detter J.C."/>
            <person name="Halden R.U."/>
        </authorList>
    </citation>
    <scope>NUCLEOTIDE SEQUENCE [LARGE SCALE GENOMIC DNA]</scope>
    <source>
        <strain>DSM 6014 / CCUG 31198 / JCM 15750 / NBRC 105917 / EY 4224 / RW1</strain>
    </source>
</reference>